<name>RF3_ACTP7</name>
<protein>
    <recommendedName>
        <fullName evidence="1">Peptide chain release factor 3</fullName>
        <shortName evidence="1">RF-3</shortName>
    </recommendedName>
</protein>
<proteinExistence type="inferred from homology"/>
<gene>
    <name evidence="1" type="primary">prfC</name>
    <name type="ordered locus">APP7_0030</name>
</gene>
<sequence>MSYPQEVNKRRTFAIISHPDAGKTTITEKVLLYGNAIQTAGSVKGKGSSAHAKSDWMEMEKQRGISITTSVMQFPYNNCLVNLLDTPGHEDFSEDTYRTLTAVDSCLMVIDSAKGVEERTIKLMEVTRLRDTPILTFMNKLDRDIRDPMELLDEVESVLKIRCAPITWPIGCGKLFKGVYHIAKDETYLYQSGQGSTIQEVRIVKGLSSPELDAAVGDDLANQLREELELVQGASNEFDHEAFINGELTPVFFGTALGNFGVDHFLDGLTEWAPKPQARQTDVRTVESSEEKFSGFVFKIQANMDPKHRDRVAFMRVVSGKYEKGMKLKHVRIGKDVVISDALTFMAGDRSHAEEAYAGDIIGLHNHGTIQIGDTFTQGEVMKFTGIPNFAPELFRRIRLKDPLKQKQLLKGLVQLSEEGAVQVFRPLMNNDLIVGAVGVLQFDVVVSRLKTEYNVEAIYEAVNVATARWVECCDAKKFEEFKRKNEQNLALDGGDNLTYIAPTMVNLNLAQERYPDINFFKTREH</sequence>
<feature type="chain" id="PRO_1000092470" description="Peptide chain release factor 3">
    <location>
        <begin position="1"/>
        <end position="526"/>
    </location>
</feature>
<feature type="domain" description="tr-type G">
    <location>
        <begin position="8"/>
        <end position="277"/>
    </location>
</feature>
<feature type="binding site" evidence="1">
    <location>
        <begin position="17"/>
        <end position="24"/>
    </location>
    <ligand>
        <name>GTP</name>
        <dbReference type="ChEBI" id="CHEBI:37565"/>
    </ligand>
</feature>
<feature type="binding site" evidence="1">
    <location>
        <begin position="85"/>
        <end position="89"/>
    </location>
    <ligand>
        <name>GTP</name>
        <dbReference type="ChEBI" id="CHEBI:37565"/>
    </ligand>
</feature>
<feature type="binding site" evidence="1">
    <location>
        <begin position="139"/>
        <end position="142"/>
    </location>
    <ligand>
        <name>GTP</name>
        <dbReference type="ChEBI" id="CHEBI:37565"/>
    </ligand>
</feature>
<dbReference type="EMBL" id="CP001091">
    <property type="protein sequence ID" value="ACE60682.1"/>
    <property type="molecule type" value="Genomic_DNA"/>
</dbReference>
<dbReference type="RefSeq" id="WP_005616523.1">
    <property type="nucleotide sequence ID" value="NC_010939.1"/>
</dbReference>
<dbReference type="SMR" id="B3GZM0"/>
<dbReference type="KEGG" id="apa:APP7_0030"/>
<dbReference type="HOGENOM" id="CLU_002794_2_1_6"/>
<dbReference type="Proteomes" id="UP000001226">
    <property type="component" value="Chromosome"/>
</dbReference>
<dbReference type="GO" id="GO:0005829">
    <property type="term" value="C:cytosol"/>
    <property type="evidence" value="ECO:0007669"/>
    <property type="project" value="TreeGrafter"/>
</dbReference>
<dbReference type="GO" id="GO:0005525">
    <property type="term" value="F:GTP binding"/>
    <property type="evidence" value="ECO:0007669"/>
    <property type="project" value="UniProtKB-UniRule"/>
</dbReference>
<dbReference type="GO" id="GO:0003924">
    <property type="term" value="F:GTPase activity"/>
    <property type="evidence" value="ECO:0007669"/>
    <property type="project" value="InterPro"/>
</dbReference>
<dbReference type="GO" id="GO:0097216">
    <property type="term" value="F:guanosine tetraphosphate binding"/>
    <property type="evidence" value="ECO:0007669"/>
    <property type="project" value="UniProtKB-ARBA"/>
</dbReference>
<dbReference type="GO" id="GO:0016150">
    <property type="term" value="F:translation release factor activity, codon nonspecific"/>
    <property type="evidence" value="ECO:0007669"/>
    <property type="project" value="TreeGrafter"/>
</dbReference>
<dbReference type="GO" id="GO:0016149">
    <property type="term" value="F:translation release factor activity, codon specific"/>
    <property type="evidence" value="ECO:0007669"/>
    <property type="project" value="UniProtKB-UniRule"/>
</dbReference>
<dbReference type="GO" id="GO:0006449">
    <property type="term" value="P:regulation of translational termination"/>
    <property type="evidence" value="ECO:0007669"/>
    <property type="project" value="UniProtKB-UniRule"/>
</dbReference>
<dbReference type="CDD" id="cd04169">
    <property type="entry name" value="RF3"/>
    <property type="match status" value="1"/>
</dbReference>
<dbReference type="CDD" id="cd03689">
    <property type="entry name" value="RF3_II"/>
    <property type="match status" value="1"/>
</dbReference>
<dbReference type="CDD" id="cd16259">
    <property type="entry name" value="RF3_III"/>
    <property type="match status" value="1"/>
</dbReference>
<dbReference type="FunFam" id="2.40.30.10:FF:000040">
    <property type="entry name" value="Peptide chain release factor 3"/>
    <property type="match status" value="1"/>
</dbReference>
<dbReference type="FunFam" id="3.30.70.3280:FF:000001">
    <property type="entry name" value="Peptide chain release factor 3"/>
    <property type="match status" value="1"/>
</dbReference>
<dbReference type="FunFam" id="3.40.50.300:FF:000542">
    <property type="entry name" value="Peptide chain release factor 3"/>
    <property type="match status" value="1"/>
</dbReference>
<dbReference type="Gene3D" id="3.40.50.300">
    <property type="entry name" value="P-loop containing nucleotide triphosphate hydrolases"/>
    <property type="match status" value="2"/>
</dbReference>
<dbReference type="Gene3D" id="3.30.70.3280">
    <property type="entry name" value="Peptide chain release factor 3, domain III"/>
    <property type="match status" value="1"/>
</dbReference>
<dbReference type="HAMAP" id="MF_00072">
    <property type="entry name" value="Rel_fac_3"/>
    <property type="match status" value="1"/>
</dbReference>
<dbReference type="InterPro" id="IPR053905">
    <property type="entry name" value="EF-G-like_DII"/>
</dbReference>
<dbReference type="InterPro" id="IPR035647">
    <property type="entry name" value="EFG_III/V"/>
</dbReference>
<dbReference type="InterPro" id="IPR031157">
    <property type="entry name" value="G_TR_CS"/>
</dbReference>
<dbReference type="InterPro" id="IPR027417">
    <property type="entry name" value="P-loop_NTPase"/>
</dbReference>
<dbReference type="InterPro" id="IPR004548">
    <property type="entry name" value="PrfC"/>
</dbReference>
<dbReference type="InterPro" id="IPR032090">
    <property type="entry name" value="RF3_C"/>
</dbReference>
<dbReference type="InterPro" id="IPR038467">
    <property type="entry name" value="RF3_dom_3_sf"/>
</dbReference>
<dbReference type="InterPro" id="IPR041732">
    <property type="entry name" value="RF3_GTP-bd"/>
</dbReference>
<dbReference type="InterPro" id="IPR005225">
    <property type="entry name" value="Small_GTP-bd"/>
</dbReference>
<dbReference type="InterPro" id="IPR000795">
    <property type="entry name" value="T_Tr_GTP-bd_dom"/>
</dbReference>
<dbReference type="InterPro" id="IPR009000">
    <property type="entry name" value="Transl_B-barrel_sf"/>
</dbReference>
<dbReference type="NCBIfam" id="TIGR00503">
    <property type="entry name" value="prfC"/>
    <property type="match status" value="1"/>
</dbReference>
<dbReference type="NCBIfam" id="NF001964">
    <property type="entry name" value="PRK00741.1"/>
    <property type="match status" value="1"/>
</dbReference>
<dbReference type="NCBIfam" id="TIGR00231">
    <property type="entry name" value="small_GTP"/>
    <property type="match status" value="1"/>
</dbReference>
<dbReference type="PANTHER" id="PTHR43556">
    <property type="entry name" value="PEPTIDE CHAIN RELEASE FACTOR RF3"/>
    <property type="match status" value="1"/>
</dbReference>
<dbReference type="PANTHER" id="PTHR43556:SF2">
    <property type="entry name" value="PEPTIDE CHAIN RELEASE FACTOR RF3"/>
    <property type="match status" value="1"/>
</dbReference>
<dbReference type="Pfam" id="PF22042">
    <property type="entry name" value="EF-G_D2"/>
    <property type="match status" value="1"/>
</dbReference>
<dbReference type="Pfam" id="PF00009">
    <property type="entry name" value="GTP_EFTU"/>
    <property type="match status" value="1"/>
</dbReference>
<dbReference type="Pfam" id="PF16658">
    <property type="entry name" value="RF3_C"/>
    <property type="match status" value="1"/>
</dbReference>
<dbReference type="PRINTS" id="PR00315">
    <property type="entry name" value="ELONGATNFCT"/>
</dbReference>
<dbReference type="SUPFAM" id="SSF54980">
    <property type="entry name" value="EF-G C-terminal domain-like"/>
    <property type="match status" value="1"/>
</dbReference>
<dbReference type="SUPFAM" id="SSF52540">
    <property type="entry name" value="P-loop containing nucleoside triphosphate hydrolases"/>
    <property type="match status" value="1"/>
</dbReference>
<dbReference type="SUPFAM" id="SSF50447">
    <property type="entry name" value="Translation proteins"/>
    <property type="match status" value="1"/>
</dbReference>
<dbReference type="PROSITE" id="PS00301">
    <property type="entry name" value="G_TR_1"/>
    <property type="match status" value="1"/>
</dbReference>
<dbReference type="PROSITE" id="PS51722">
    <property type="entry name" value="G_TR_2"/>
    <property type="match status" value="1"/>
</dbReference>
<reference key="1">
    <citation type="submission" date="2008-06" db="EMBL/GenBank/DDBJ databases">
        <title>Genome and proteome analysis of A. pleuropneumoniae serotype 7.</title>
        <authorList>
            <person name="Linke B."/>
            <person name="Buettner F."/>
            <person name="Martinez-Arias R."/>
            <person name="Goesmann A."/>
            <person name="Baltes N."/>
            <person name="Tegetmeyer H."/>
            <person name="Singh M."/>
            <person name="Gerlach G.F."/>
        </authorList>
    </citation>
    <scope>NUCLEOTIDE SEQUENCE [LARGE SCALE GENOMIC DNA]</scope>
    <source>
        <strain>AP76</strain>
    </source>
</reference>
<keyword id="KW-0963">Cytoplasm</keyword>
<keyword id="KW-0342">GTP-binding</keyword>
<keyword id="KW-0547">Nucleotide-binding</keyword>
<keyword id="KW-0648">Protein biosynthesis</keyword>
<comment type="function">
    <text evidence="1">Increases the formation of ribosomal termination complexes and stimulates activities of RF-1 and RF-2. It binds guanine nucleotides and has strong preference for UGA stop codons. It may interact directly with the ribosome. The stimulation of RF-1 and RF-2 is significantly reduced by GTP and GDP, but not by GMP.</text>
</comment>
<comment type="subcellular location">
    <subcellularLocation>
        <location evidence="1">Cytoplasm</location>
    </subcellularLocation>
</comment>
<comment type="similarity">
    <text evidence="1">Belongs to the TRAFAC class translation factor GTPase superfamily. Classic translation factor GTPase family. PrfC subfamily.</text>
</comment>
<organism>
    <name type="scientific">Actinobacillus pleuropneumoniae serotype 7 (strain AP76)</name>
    <dbReference type="NCBI Taxonomy" id="537457"/>
    <lineage>
        <taxon>Bacteria</taxon>
        <taxon>Pseudomonadati</taxon>
        <taxon>Pseudomonadota</taxon>
        <taxon>Gammaproteobacteria</taxon>
        <taxon>Pasteurellales</taxon>
        <taxon>Pasteurellaceae</taxon>
        <taxon>Actinobacillus</taxon>
    </lineage>
</organism>
<accession>B3GZM0</accession>
<evidence type="ECO:0000255" key="1">
    <source>
        <dbReference type="HAMAP-Rule" id="MF_00072"/>
    </source>
</evidence>